<proteinExistence type="inferred from homology"/>
<accession>Q8Y211</accession>
<sequence>MLTFQQLILKLQSYWDAQGCALLQPIDLEVGAGTSHVHTFLRAIGPEPWRAAYVQPSRRPKDGRYGENPNRLQHYYQYQVVLKPAPENILDLYLGSLQALGLDLKQNDVRFVEDDWENPTLGAWGLGWEVWLNGMEVTQFTYFQQVGGLDCKPITGEITYGIERLAMYLQQVENVYDLVWTEWEEPGPNGPVKRRLTYGDVYHQNEVEQSTYNFEHADTAVLFRRFAEHEAEAKRLMGVREEGAADDGAAVPQLALPAYEQVLKAGHTFNLLDARGAISVTERAAYIGRIRNLSRLVAQAYYDSRERLGFPMCGTAAAPAATEAA</sequence>
<name>SYGA_RALN1</name>
<organism>
    <name type="scientific">Ralstonia nicotianae (strain ATCC BAA-1114 / GMI1000)</name>
    <name type="common">Ralstonia solanacearum</name>
    <dbReference type="NCBI Taxonomy" id="267608"/>
    <lineage>
        <taxon>Bacteria</taxon>
        <taxon>Pseudomonadati</taxon>
        <taxon>Pseudomonadota</taxon>
        <taxon>Betaproteobacteria</taxon>
        <taxon>Burkholderiales</taxon>
        <taxon>Burkholderiaceae</taxon>
        <taxon>Ralstonia</taxon>
        <taxon>Ralstonia solanacearum species complex</taxon>
    </lineage>
</organism>
<feature type="chain" id="PRO_0000072857" description="Glycine--tRNA ligase alpha subunit">
    <location>
        <begin position="1"/>
        <end position="325"/>
    </location>
</feature>
<protein>
    <recommendedName>
        <fullName evidence="1">Glycine--tRNA ligase alpha subunit</fullName>
        <ecNumber evidence="1">6.1.1.14</ecNumber>
    </recommendedName>
    <alternativeName>
        <fullName evidence="1">Glycyl-tRNA synthetase alpha subunit</fullName>
        <shortName evidence="1">GlyRS</shortName>
    </alternativeName>
</protein>
<gene>
    <name evidence="1" type="primary">glyQ</name>
    <name type="ordered locus">RSc0526</name>
    <name type="ORF">RS04942</name>
</gene>
<keyword id="KW-0030">Aminoacyl-tRNA synthetase</keyword>
<keyword id="KW-0067">ATP-binding</keyword>
<keyword id="KW-0963">Cytoplasm</keyword>
<keyword id="KW-0436">Ligase</keyword>
<keyword id="KW-0547">Nucleotide-binding</keyword>
<keyword id="KW-0648">Protein biosynthesis</keyword>
<keyword id="KW-1185">Reference proteome</keyword>
<comment type="catalytic activity">
    <reaction evidence="1">
        <text>tRNA(Gly) + glycine + ATP = glycyl-tRNA(Gly) + AMP + diphosphate</text>
        <dbReference type="Rhea" id="RHEA:16013"/>
        <dbReference type="Rhea" id="RHEA-COMP:9664"/>
        <dbReference type="Rhea" id="RHEA-COMP:9683"/>
        <dbReference type="ChEBI" id="CHEBI:30616"/>
        <dbReference type="ChEBI" id="CHEBI:33019"/>
        <dbReference type="ChEBI" id="CHEBI:57305"/>
        <dbReference type="ChEBI" id="CHEBI:78442"/>
        <dbReference type="ChEBI" id="CHEBI:78522"/>
        <dbReference type="ChEBI" id="CHEBI:456215"/>
        <dbReference type="EC" id="6.1.1.14"/>
    </reaction>
</comment>
<comment type="subunit">
    <text evidence="1">Tetramer of two alpha and two beta subunits.</text>
</comment>
<comment type="subcellular location">
    <subcellularLocation>
        <location evidence="1">Cytoplasm</location>
    </subcellularLocation>
</comment>
<comment type="similarity">
    <text evidence="1">Belongs to the class-II aminoacyl-tRNA synthetase family.</text>
</comment>
<dbReference type="EC" id="6.1.1.14" evidence="1"/>
<dbReference type="EMBL" id="AL646052">
    <property type="protein sequence ID" value="CAD14054.1"/>
    <property type="molecule type" value="Genomic_DNA"/>
</dbReference>
<dbReference type="RefSeq" id="WP_011000485.1">
    <property type="nucleotide sequence ID" value="NC_003295.1"/>
</dbReference>
<dbReference type="SMR" id="Q8Y211"/>
<dbReference type="STRING" id="267608.RSc0526"/>
<dbReference type="EnsemblBacteria" id="CAD14054">
    <property type="protein sequence ID" value="CAD14054"/>
    <property type="gene ID" value="RSc0526"/>
</dbReference>
<dbReference type="KEGG" id="rso:RSc0526"/>
<dbReference type="eggNOG" id="COG0752">
    <property type="taxonomic scope" value="Bacteria"/>
</dbReference>
<dbReference type="HOGENOM" id="CLU_057066_1_0_4"/>
<dbReference type="Proteomes" id="UP000001436">
    <property type="component" value="Chromosome"/>
</dbReference>
<dbReference type="GO" id="GO:0005829">
    <property type="term" value="C:cytosol"/>
    <property type="evidence" value="ECO:0007669"/>
    <property type="project" value="TreeGrafter"/>
</dbReference>
<dbReference type="GO" id="GO:0005524">
    <property type="term" value="F:ATP binding"/>
    <property type="evidence" value="ECO:0007669"/>
    <property type="project" value="UniProtKB-UniRule"/>
</dbReference>
<dbReference type="GO" id="GO:0004820">
    <property type="term" value="F:glycine-tRNA ligase activity"/>
    <property type="evidence" value="ECO:0007669"/>
    <property type="project" value="UniProtKB-UniRule"/>
</dbReference>
<dbReference type="GO" id="GO:0006426">
    <property type="term" value="P:glycyl-tRNA aminoacylation"/>
    <property type="evidence" value="ECO:0007669"/>
    <property type="project" value="UniProtKB-UniRule"/>
</dbReference>
<dbReference type="CDD" id="cd00733">
    <property type="entry name" value="GlyRS_alpha_core"/>
    <property type="match status" value="1"/>
</dbReference>
<dbReference type="FunFam" id="3.30.930.10:FF:000006">
    <property type="entry name" value="Glycine--tRNA ligase alpha subunit"/>
    <property type="match status" value="1"/>
</dbReference>
<dbReference type="Gene3D" id="3.30.930.10">
    <property type="entry name" value="Bira Bifunctional Protein, Domain 2"/>
    <property type="match status" value="1"/>
</dbReference>
<dbReference type="Gene3D" id="1.20.58.180">
    <property type="entry name" value="Class II aaRS and biotin synthetases, domain 2"/>
    <property type="match status" value="1"/>
</dbReference>
<dbReference type="HAMAP" id="MF_00254">
    <property type="entry name" value="Gly_tRNA_synth_alpha"/>
    <property type="match status" value="1"/>
</dbReference>
<dbReference type="InterPro" id="IPR045864">
    <property type="entry name" value="aa-tRNA-synth_II/BPL/LPL"/>
</dbReference>
<dbReference type="InterPro" id="IPR006194">
    <property type="entry name" value="Gly-tRNA-synth_heterodimer"/>
</dbReference>
<dbReference type="InterPro" id="IPR002310">
    <property type="entry name" value="Gly-tRNA_ligase_asu"/>
</dbReference>
<dbReference type="NCBIfam" id="TIGR00388">
    <property type="entry name" value="glyQ"/>
    <property type="match status" value="1"/>
</dbReference>
<dbReference type="NCBIfam" id="NF006827">
    <property type="entry name" value="PRK09348.1"/>
    <property type="match status" value="1"/>
</dbReference>
<dbReference type="PANTHER" id="PTHR30075:SF2">
    <property type="entry name" value="GLYCINE--TRNA LIGASE, CHLOROPLASTIC_MITOCHONDRIAL 2"/>
    <property type="match status" value="1"/>
</dbReference>
<dbReference type="PANTHER" id="PTHR30075">
    <property type="entry name" value="GLYCYL-TRNA SYNTHETASE"/>
    <property type="match status" value="1"/>
</dbReference>
<dbReference type="Pfam" id="PF02091">
    <property type="entry name" value="tRNA-synt_2e"/>
    <property type="match status" value="1"/>
</dbReference>
<dbReference type="PRINTS" id="PR01044">
    <property type="entry name" value="TRNASYNTHGA"/>
</dbReference>
<dbReference type="SUPFAM" id="SSF55681">
    <property type="entry name" value="Class II aaRS and biotin synthetases"/>
    <property type="match status" value="1"/>
</dbReference>
<dbReference type="PROSITE" id="PS50861">
    <property type="entry name" value="AA_TRNA_LIGASE_II_GLYAB"/>
    <property type="match status" value="1"/>
</dbReference>
<evidence type="ECO:0000255" key="1">
    <source>
        <dbReference type="HAMAP-Rule" id="MF_00254"/>
    </source>
</evidence>
<reference key="1">
    <citation type="journal article" date="2002" name="Nature">
        <title>Genome sequence of the plant pathogen Ralstonia solanacearum.</title>
        <authorList>
            <person name="Salanoubat M."/>
            <person name="Genin S."/>
            <person name="Artiguenave F."/>
            <person name="Gouzy J."/>
            <person name="Mangenot S."/>
            <person name="Arlat M."/>
            <person name="Billault A."/>
            <person name="Brottier P."/>
            <person name="Camus J.-C."/>
            <person name="Cattolico L."/>
            <person name="Chandler M."/>
            <person name="Choisne N."/>
            <person name="Claudel-Renard C."/>
            <person name="Cunnac S."/>
            <person name="Demange N."/>
            <person name="Gaspin C."/>
            <person name="Lavie M."/>
            <person name="Moisan A."/>
            <person name="Robert C."/>
            <person name="Saurin W."/>
            <person name="Schiex T."/>
            <person name="Siguier P."/>
            <person name="Thebault P."/>
            <person name="Whalen M."/>
            <person name="Wincker P."/>
            <person name="Levy M."/>
            <person name="Weissenbach J."/>
            <person name="Boucher C.A."/>
        </authorList>
    </citation>
    <scope>NUCLEOTIDE SEQUENCE [LARGE SCALE GENOMIC DNA]</scope>
    <source>
        <strain>ATCC BAA-1114 / GMI1000</strain>
    </source>
</reference>